<feature type="chain" id="PRO_0000104986" description="DNA-binding protein HU">
    <location>
        <begin position="1"/>
        <end position="91"/>
    </location>
</feature>
<gene>
    <name type="primary">hup</name>
    <name type="synonym">hstH</name>
</gene>
<proteinExistence type="inferred from homology"/>
<accession>P96045</accession>
<sequence length="91" mass="9605">MANKQDLIAKVAEATELTKKDSAAAVDAVFASIEEFLAAGEKVQLIGFGNFEVRERAARQGRNPQTGETISIAASKVPAFKAGKALKDAVK</sequence>
<reference key="1">
    <citation type="journal article" date="1999" name="Plasmid">
        <title>Characterization in vitro and in vivo of a new HU family protein from Streptococcus thermophilus ST11.</title>
        <authorList>
            <person name="Dixon-Fyle S.M."/>
            <person name="Caro L."/>
        </authorList>
    </citation>
    <scope>NUCLEOTIDE SEQUENCE [GENOMIC DNA]</scope>
    <source>
        <strain>ST11</strain>
    </source>
</reference>
<name>DBH_STRTR</name>
<organism>
    <name type="scientific">Streptococcus thermophilus</name>
    <dbReference type="NCBI Taxonomy" id="1308"/>
    <lineage>
        <taxon>Bacteria</taxon>
        <taxon>Bacillati</taxon>
        <taxon>Bacillota</taxon>
        <taxon>Bacilli</taxon>
        <taxon>Lactobacillales</taxon>
        <taxon>Streptococcaceae</taxon>
        <taxon>Streptococcus</taxon>
    </lineage>
</organism>
<protein>
    <recommendedName>
        <fullName>DNA-binding protein HU</fullName>
    </recommendedName>
</protein>
<dbReference type="EMBL" id="Y11213">
    <property type="protein sequence ID" value="CAA72098.1"/>
    <property type="molecule type" value="Genomic_DNA"/>
</dbReference>
<dbReference type="RefSeq" id="WP_002950996.1">
    <property type="nucleotide sequence ID" value="NZ_WMLD01000003.1"/>
</dbReference>
<dbReference type="SMR" id="P96045"/>
<dbReference type="eggNOG" id="COG0776">
    <property type="taxonomic scope" value="Bacteria"/>
</dbReference>
<dbReference type="OMA" id="AFSAGKM"/>
<dbReference type="OrthoDB" id="9799835at2"/>
<dbReference type="GO" id="GO:0005829">
    <property type="term" value="C:cytosol"/>
    <property type="evidence" value="ECO:0007669"/>
    <property type="project" value="TreeGrafter"/>
</dbReference>
<dbReference type="GO" id="GO:0003677">
    <property type="term" value="F:DNA binding"/>
    <property type="evidence" value="ECO:0007669"/>
    <property type="project" value="UniProtKB-KW"/>
</dbReference>
<dbReference type="GO" id="GO:0030527">
    <property type="term" value="F:structural constituent of chromatin"/>
    <property type="evidence" value="ECO:0007669"/>
    <property type="project" value="InterPro"/>
</dbReference>
<dbReference type="GO" id="GO:0030261">
    <property type="term" value="P:chromosome condensation"/>
    <property type="evidence" value="ECO:0007669"/>
    <property type="project" value="UniProtKB-KW"/>
</dbReference>
<dbReference type="CDD" id="cd13831">
    <property type="entry name" value="HU"/>
    <property type="match status" value="1"/>
</dbReference>
<dbReference type="FunFam" id="4.10.520.10:FF:000001">
    <property type="entry name" value="DNA-binding protein HU"/>
    <property type="match status" value="1"/>
</dbReference>
<dbReference type="Gene3D" id="4.10.520.10">
    <property type="entry name" value="IHF-like DNA-binding proteins"/>
    <property type="match status" value="1"/>
</dbReference>
<dbReference type="InterPro" id="IPR000119">
    <property type="entry name" value="Hist_DNA-bd"/>
</dbReference>
<dbReference type="InterPro" id="IPR020816">
    <property type="entry name" value="Histone-like_DNA-bd_CS"/>
</dbReference>
<dbReference type="InterPro" id="IPR010992">
    <property type="entry name" value="IHF-like_DNA-bd_dom_sf"/>
</dbReference>
<dbReference type="PANTHER" id="PTHR33175">
    <property type="entry name" value="DNA-BINDING PROTEIN HU"/>
    <property type="match status" value="1"/>
</dbReference>
<dbReference type="PANTHER" id="PTHR33175:SF3">
    <property type="entry name" value="DNA-BINDING PROTEIN HU-BETA"/>
    <property type="match status" value="1"/>
</dbReference>
<dbReference type="Pfam" id="PF00216">
    <property type="entry name" value="Bac_DNA_binding"/>
    <property type="match status" value="1"/>
</dbReference>
<dbReference type="PRINTS" id="PR01727">
    <property type="entry name" value="DNABINDINGHU"/>
</dbReference>
<dbReference type="SMART" id="SM00411">
    <property type="entry name" value="BHL"/>
    <property type="match status" value="1"/>
</dbReference>
<dbReference type="SUPFAM" id="SSF47729">
    <property type="entry name" value="IHF-like DNA-binding proteins"/>
    <property type="match status" value="1"/>
</dbReference>
<dbReference type="PROSITE" id="PS00045">
    <property type="entry name" value="HISTONE_LIKE"/>
    <property type="match status" value="1"/>
</dbReference>
<comment type="function">
    <text>Histone-like DNA-binding protein which is capable of wrapping DNA to stabilize it, and thus to prevent its denaturation under extreme environmental conditions.</text>
</comment>
<comment type="subunit">
    <text>Homodimer.</text>
</comment>
<comment type="similarity">
    <text evidence="1">Belongs to the bacterial histone-like protein family.</text>
</comment>
<evidence type="ECO:0000305" key="1"/>
<keyword id="KW-0226">DNA condensation</keyword>
<keyword id="KW-0238">DNA-binding</keyword>